<organism>
    <name type="scientific">Mycobacterium tuberculosis (strain CDC 1551 / Oshkosh)</name>
    <dbReference type="NCBI Taxonomy" id="83331"/>
    <lineage>
        <taxon>Bacteria</taxon>
        <taxon>Bacillati</taxon>
        <taxon>Actinomycetota</taxon>
        <taxon>Actinomycetes</taxon>
        <taxon>Mycobacteriales</taxon>
        <taxon>Mycobacteriaceae</taxon>
        <taxon>Mycobacterium</taxon>
        <taxon>Mycobacterium tuberculosis complex</taxon>
    </lineage>
</organism>
<sequence length="414" mass="44362">MKFVVASYGTRGDIEPCAAVGLELQRRGHDVCLAVPPNLIGFVETAGLSAVAYGSRDSQEQLDEQFLHNAWKLQNPIKLLREAMAPVTEGWAELSAMLTPVAAGADLLLTGQIYQEVVANVAEHHGIPLAALHFYPVRANGEIAFPARLPAPLVRSTITAIDWLYWRMTKGVEDAQRRELGLPKASTPAPRRMAVRGSLEIQAYDALCFPGLAAEWGGRRPFVGALTMESATDADDEVASWIAADTPPIYFGFGSMPIGSLADRVAMISAACAELGERALICSGPSDATGIPQFDHVKVVRVVSHAAVFPTCRAVVHHGGAGTTAAGLRAGIPTLILWVTSDQPIWAAQIKQLKVGRGRRFSSATKESLIADLRTILAPDYVTRAREIASRMTKPAASVTATADLLEDAARRAR</sequence>
<accession>P9WN06</accession>
<accession>L0T9W0</accession>
<accession>P64865</accession>
<accession>Q50583</accession>
<protein>
    <recommendedName>
        <fullName>Uncharacterized glycosyltransferase MT1575</fullName>
        <ecNumber>2.4.-.-</ecNumber>
    </recommendedName>
</protein>
<feature type="chain" id="PRO_0000427210" description="Uncharacterized glycosyltransferase MT1575">
    <location>
        <begin position="1"/>
        <end position="414"/>
    </location>
</feature>
<name>Y1524_MYCTO</name>
<evidence type="ECO:0000305" key="1"/>
<proteinExistence type="inferred from homology"/>
<comment type="similarity">
    <text evidence="1">Belongs to the glycosyltransferase 28 family.</text>
</comment>
<dbReference type="EC" id="2.4.-.-"/>
<dbReference type="EMBL" id="AE000516">
    <property type="protein sequence ID" value="AAK45842.1"/>
    <property type="molecule type" value="Genomic_DNA"/>
</dbReference>
<dbReference type="PIR" id="D70723">
    <property type="entry name" value="D70723"/>
</dbReference>
<dbReference type="RefSeq" id="WP_003407671.1">
    <property type="nucleotide sequence ID" value="NZ_KK341227.1"/>
</dbReference>
<dbReference type="SMR" id="P9WN06"/>
<dbReference type="CAZy" id="GT1">
    <property type="family name" value="Glycosyltransferase Family 1"/>
</dbReference>
<dbReference type="KEGG" id="mtc:MT1575"/>
<dbReference type="PATRIC" id="fig|83331.31.peg.1697"/>
<dbReference type="HOGENOM" id="CLU_000537_8_0_11"/>
<dbReference type="Proteomes" id="UP000001020">
    <property type="component" value="Chromosome"/>
</dbReference>
<dbReference type="GO" id="GO:0016758">
    <property type="term" value="F:hexosyltransferase activity"/>
    <property type="evidence" value="ECO:0007669"/>
    <property type="project" value="InterPro"/>
</dbReference>
<dbReference type="GO" id="GO:0008194">
    <property type="term" value="F:UDP-glycosyltransferase activity"/>
    <property type="evidence" value="ECO:0007669"/>
    <property type="project" value="InterPro"/>
</dbReference>
<dbReference type="GO" id="GO:0005975">
    <property type="term" value="P:carbohydrate metabolic process"/>
    <property type="evidence" value="ECO:0007669"/>
    <property type="project" value="InterPro"/>
</dbReference>
<dbReference type="GO" id="GO:0030259">
    <property type="term" value="P:lipid glycosylation"/>
    <property type="evidence" value="ECO:0007669"/>
    <property type="project" value="InterPro"/>
</dbReference>
<dbReference type="GO" id="GO:0033072">
    <property type="term" value="P:vancomycin biosynthetic process"/>
    <property type="evidence" value="ECO:0007669"/>
    <property type="project" value="UniProtKB-ARBA"/>
</dbReference>
<dbReference type="CDD" id="cd03784">
    <property type="entry name" value="GT1_Gtf-like"/>
    <property type="match status" value="1"/>
</dbReference>
<dbReference type="FunFam" id="3.40.50.2000:FF:000170">
    <property type="entry name" value="Probable glycosyltransferase"/>
    <property type="match status" value="1"/>
</dbReference>
<dbReference type="FunFam" id="3.40.50.2000:FF:000009">
    <property type="entry name" value="Sterol 3-beta-glucosyltransferase UGT80A2"/>
    <property type="match status" value="1"/>
</dbReference>
<dbReference type="Gene3D" id="3.40.50.2000">
    <property type="entry name" value="Glycogen Phosphorylase B"/>
    <property type="match status" value="2"/>
</dbReference>
<dbReference type="InterPro" id="IPR010610">
    <property type="entry name" value="EryCIII-like_C"/>
</dbReference>
<dbReference type="InterPro" id="IPR050426">
    <property type="entry name" value="Glycosyltransferase_28"/>
</dbReference>
<dbReference type="InterPro" id="IPR004276">
    <property type="entry name" value="GlycoTrans_28_N"/>
</dbReference>
<dbReference type="InterPro" id="IPR002213">
    <property type="entry name" value="UDP_glucos_trans"/>
</dbReference>
<dbReference type="PANTHER" id="PTHR48050">
    <property type="entry name" value="STEROL 3-BETA-GLUCOSYLTRANSFERASE"/>
    <property type="match status" value="1"/>
</dbReference>
<dbReference type="PANTHER" id="PTHR48050:SF13">
    <property type="entry name" value="STEROL 3-BETA-GLUCOSYLTRANSFERASE UGT80A2"/>
    <property type="match status" value="1"/>
</dbReference>
<dbReference type="Pfam" id="PF06722">
    <property type="entry name" value="EryCIII-like_C"/>
    <property type="match status" value="1"/>
</dbReference>
<dbReference type="Pfam" id="PF03033">
    <property type="entry name" value="Glyco_transf_28"/>
    <property type="match status" value="1"/>
</dbReference>
<dbReference type="SUPFAM" id="SSF53756">
    <property type="entry name" value="UDP-Glycosyltransferase/glycogen phosphorylase"/>
    <property type="match status" value="1"/>
</dbReference>
<reference key="1">
    <citation type="journal article" date="2002" name="J. Bacteriol.">
        <title>Whole-genome comparison of Mycobacterium tuberculosis clinical and laboratory strains.</title>
        <authorList>
            <person name="Fleischmann R.D."/>
            <person name="Alland D."/>
            <person name="Eisen J.A."/>
            <person name="Carpenter L."/>
            <person name="White O."/>
            <person name="Peterson J.D."/>
            <person name="DeBoy R.T."/>
            <person name="Dodson R.J."/>
            <person name="Gwinn M.L."/>
            <person name="Haft D.H."/>
            <person name="Hickey E.K."/>
            <person name="Kolonay J.F."/>
            <person name="Nelson W.C."/>
            <person name="Umayam L.A."/>
            <person name="Ermolaeva M.D."/>
            <person name="Salzberg S.L."/>
            <person name="Delcher A."/>
            <person name="Utterback T.R."/>
            <person name="Weidman J.F."/>
            <person name="Khouri H.M."/>
            <person name="Gill J."/>
            <person name="Mikula A."/>
            <person name="Bishai W."/>
            <person name="Jacobs W.R. Jr."/>
            <person name="Venter J.C."/>
            <person name="Fraser C.M."/>
        </authorList>
    </citation>
    <scope>NUCLEOTIDE SEQUENCE [LARGE SCALE GENOMIC DNA]</scope>
    <source>
        <strain>CDC 1551 / Oshkosh</strain>
    </source>
</reference>
<keyword id="KW-0328">Glycosyltransferase</keyword>
<keyword id="KW-1185">Reference proteome</keyword>
<keyword id="KW-0808">Transferase</keyword>
<gene>
    <name type="ordered locus">MT1575</name>
</gene>